<sequence length="216" mass="24083">MALSEAAQKVQAALLERGLETPMVPCGLSREERKDKIEQHMRAILGLMSLDLTDDSLADTPRRIAKMYVDEIFSGLDYENFPKITVIDNKMGVDEMVRVQDISLTSTCEHHLVTIDGTATVAYLPRKKIIGLSKINRIVRFFAQRPQVQERLTQQVLVALQALLETKDVAVKIDAVHYCVKSRGVMDATSSTTTTALGGIFKSNPATRAEFLHQPR</sequence>
<dbReference type="EC" id="3.5.4.16" evidence="2"/>
<dbReference type="EMBL" id="CP000507">
    <property type="protein sequence ID" value="ABL98533.1"/>
    <property type="molecule type" value="Genomic_DNA"/>
</dbReference>
<dbReference type="RefSeq" id="WP_011758443.1">
    <property type="nucleotide sequence ID" value="NC_008700.1"/>
</dbReference>
<dbReference type="SMR" id="A1S2C7"/>
<dbReference type="STRING" id="326297.Sama_0322"/>
<dbReference type="KEGG" id="saz:Sama_0322"/>
<dbReference type="eggNOG" id="COG0302">
    <property type="taxonomic scope" value="Bacteria"/>
</dbReference>
<dbReference type="HOGENOM" id="CLU_049768_3_2_6"/>
<dbReference type="OrthoDB" id="9801207at2"/>
<dbReference type="UniPathway" id="UPA00848">
    <property type="reaction ID" value="UER00151"/>
</dbReference>
<dbReference type="Proteomes" id="UP000009175">
    <property type="component" value="Chromosome"/>
</dbReference>
<dbReference type="GO" id="GO:0005737">
    <property type="term" value="C:cytoplasm"/>
    <property type="evidence" value="ECO:0007669"/>
    <property type="project" value="TreeGrafter"/>
</dbReference>
<dbReference type="GO" id="GO:0005525">
    <property type="term" value="F:GTP binding"/>
    <property type="evidence" value="ECO:0007669"/>
    <property type="project" value="UniProtKB-KW"/>
</dbReference>
<dbReference type="GO" id="GO:0003934">
    <property type="term" value="F:GTP cyclohydrolase I activity"/>
    <property type="evidence" value="ECO:0007669"/>
    <property type="project" value="UniProtKB-UniRule"/>
</dbReference>
<dbReference type="GO" id="GO:0008270">
    <property type="term" value="F:zinc ion binding"/>
    <property type="evidence" value="ECO:0007669"/>
    <property type="project" value="UniProtKB-UniRule"/>
</dbReference>
<dbReference type="GO" id="GO:0006730">
    <property type="term" value="P:one-carbon metabolic process"/>
    <property type="evidence" value="ECO:0007669"/>
    <property type="project" value="UniProtKB-UniRule"/>
</dbReference>
<dbReference type="GO" id="GO:0006729">
    <property type="term" value="P:tetrahydrobiopterin biosynthetic process"/>
    <property type="evidence" value="ECO:0007669"/>
    <property type="project" value="TreeGrafter"/>
</dbReference>
<dbReference type="GO" id="GO:0046654">
    <property type="term" value="P:tetrahydrofolate biosynthetic process"/>
    <property type="evidence" value="ECO:0007669"/>
    <property type="project" value="UniProtKB-UniRule"/>
</dbReference>
<dbReference type="FunFam" id="3.30.1130.10:FF:000001">
    <property type="entry name" value="GTP cyclohydrolase 1"/>
    <property type="match status" value="1"/>
</dbReference>
<dbReference type="Gene3D" id="1.10.286.10">
    <property type="match status" value="1"/>
</dbReference>
<dbReference type="Gene3D" id="3.30.1130.10">
    <property type="match status" value="1"/>
</dbReference>
<dbReference type="HAMAP" id="MF_00223">
    <property type="entry name" value="FolE"/>
    <property type="match status" value="1"/>
</dbReference>
<dbReference type="InterPro" id="IPR043133">
    <property type="entry name" value="GTP-CH-I_C/QueF"/>
</dbReference>
<dbReference type="InterPro" id="IPR043134">
    <property type="entry name" value="GTP-CH-I_N"/>
</dbReference>
<dbReference type="InterPro" id="IPR001474">
    <property type="entry name" value="GTP_CycHdrlase_I"/>
</dbReference>
<dbReference type="InterPro" id="IPR018234">
    <property type="entry name" value="GTP_CycHdrlase_I_CS"/>
</dbReference>
<dbReference type="InterPro" id="IPR020602">
    <property type="entry name" value="GTP_CycHdrlase_I_dom"/>
</dbReference>
<dbReference type="NCBIfam" id="TIGR00063">
    <property type="entry name" value="folE"/>
    <property type="match status" value="1"/>
</dbReference>
<dbReference type="NCBIfam" id="NF006824">
    <property type="entry name" value="PRK09347.1-1"/>
    <property type="match status" value="1"/>
</dbReference>
<dbReference type="NCBIfam" id="NF006826">
    <property type="entry name" value="PRK09347.1-3"/>
    <property type="match status" value="1"/>
</dbReference>
<dbReference type="PANTHER" id="PTHR11109:SF7">
    <property type="entry name" value="GTP CYCLOHYDROLASE 1"/>
    <property type="match status" value="1"/>
</dbReference>
<dbReference type="PANTHER" id="PTHR11109">
    <property type="entry name" value="GTP CYCLOHYDROLASE I"/>
    <property type="match status" value="1"/>
</dbReference>
<dbReference type="Pfam" id="PF01227">
    <property type="entry name" value="GTP_cyclohydroI"/>
    <property type="match status" value="1"/>
</dbReference>
<dbReference type="SUPFAM" id="SSF55620">
    <property type="entry name" value="Tetrahydrobiopterin biosynthesis enzymes-like"/>
    <property type="match status" value="1"/>
</dbReference>
<dbReference type="PROSITE" id="PS00859">
    <property type="entry name" value="GTP_CYCLOHYDROL_1_1"/>
    <property type="match status" value="1"/>
</dbReference>
<dbReference type="PROSITE" id="PS00860">
    <property type="entry name" value="GTP_CYCLOHYDROL_1_2"/>
    <property type="match status" value="1"/>
</dbReference>
<feature type="chain" id="PRO_1000043728" description="GTP cyclohydrolase 1">
    <location>
        <begin position="1"/>
        <end position="216"/>
    </location>
</feature>
<feature type="binding site" evidence="2">
    <location>
        <position position="108"/>
    </location>
    <ligand>
        <name>Zn(2+)</name>
        <dbReference type="ChEBI" id="CHEBI:29105"/>
    </ligand>
</feature>
<feature type="binding site" evidence="2">
    <location>
        <position position="111"/>
    </location>
    <ligand>
        <name>Zn(2+)</name>
        <dbReference type="ChEBI" id="CHEBI:29105"/>
    </ligand>
</feature>
<feature type="binding site" evidence="2">
    <location>
        <position position="179"/>
    </location>
    <ligand>
        <name>Zn(2+)</name>
        <dbReference type="ChEBI" id="CHEBI:29105"/>
    </ligand>
</feature>
<protein>
    <recommendedName>
        <fullName evidence="2">GTP cyclohydrolase 1</fullName>
        <ecNumber evidence="2">3.5.4.16</ecNumber>
    </recommendedName>
    <alternativeName>
        <fullName evidence="2">GTP cyclohydrolase I</fullName>
        <shortName evidence="2">GTP-CH-I</shortName>
    </alternativeName>
</protein>
<reference key="1">
    <citation type="submission" date="2006-12" db="EMBL/GenBank/DDBJ databases">
        <title>Complete sequence of Shewanella amazonensis SB2B.</title>
        <authorList>
            <consortium name="US DOE Joint Genome Institute"/>
            <person name="Copeland A."/>
            <person name="Lucas S."/>
            <person name="Lapidus A."/>
            <person name="Barry K."/>
            <person name="Detter J.C."/>
            <person name="Glavina del Rio T."/>
            <person name="Hammon N."/>
            <person name="Israni S."/>
            <person name="Dalin E."/>
            <person name="Tice H."/>
            <person name="Pitluck S."/>
            <person name="Munk A.C."/>
            <person name="Brettin T."/>
            <person name="Bruce D."/>
            <person name="Han C."/>
            <person name="Tapia R."/>
            <person name="Gilna P."/>
            <person name="Schmutz J."/>
            <person name="Larimer F."/>
            <person name="Land M."/>
            <person name="Hauser L."/>
            <person name="Kyrpides N."/>
            <person name="Mikhailova N."/>
            <person name="Fredrickson J."/>
            <person name="Richardson P."/>
        </authorList>
    </citation>
    <scope>NUCLEOTIDE SEQUENCE [LARGE SCALE GENOMIC DNA]</scope>
    <source>
        <strain>ATCC BAA-1098 / SB2B</strain>
    </source>
</reference>
<comment type="catalytic activity">
    <reaction evidence="2">
        <text>GTP + H2O = 7,8-dihydroneopterin 3'-triphosphate + formate + H(+)</text>
        <dbReference type="Rhea" id="RHEA:17473"/>
        <dbReference type="ChEBI" id="CHEBI:15377"/>
        <dbReference type="ChEBI" id="CHEBI:15378"/>
        <dbReference type="ChEBI" id="CHEBI:15740"/>
        <dbReference type="ChEBI" id="CHEBI:37565"/>
        <dbReference type="ChEBI" id="CHEBI:58462"/>
        <dbReference type="EC" id="3.5.4.16"/>
    </reaction>
</comment>
<comment type="pathway">
    <text evidence="2">Cofactor biosynthesis; 7,8-dihydroneopterin triphosphate biosynthesis; 7,8-dihydroneopterin triphosphate from GTP: step 1/1.</text>
</comment>
<comment type="subunit">
    <text evidence="1">Toroid-shaped homodecamer, composed of two pentamers of five dimers.</text>
</comment>
<comment type="similarity">
    <text evidence="2">Belongs to the GTP cyclohydrolase I family.</text>
</comment>
<accession>A1S2C7</accession>
<name>GCH1_SHEAM</name>
<organism>
    <name type="scientific">Shewanella amazonensis (strain ATCC BAA-1098 / SB2B)</name>
    <dbReference type="NCBI Taxonomy" id="326297"/>
    <lineage>
        <taxon>Bacteria</taxon>
        <taxon>Pseudomonadati</taxon>
        <taxon>Pseudomonadota</taxon>
        <taxon>Gammaproteobacteria</taxon>
        <taxon>Alteromonadales</taxon>
        <taxon>Shewanellaceae</taxon>
        <taxon>Shewanella</taxon>
    </lineage>
</organism>
<proteinExistence type="inferred from homology"/>
<gene>
    <name evidence="2" type="primary">folE</name>
    <name type="ordered locus">Sama_0322</name>
</gene>
<evidence type="ECO:0000250" key="1"/>
<evidence type="ECO:0000255" key="2">
    <source>
        <dbReference type="HAMAP-Rule" id="MF_00223"/>
    </source>
</evidence>
<keyword id="KW-0342">GTP-binding</keyword>
<keyword id="KW-0378">Hydrolase</keyword>
<keyword id="KW-0479">Metal-binding</keyword>
<keyword id="KW-0547">Nucleotide-binding</keyword>
<keyword id="KW-0554">One-carbon metabolism</keyword>
<keyword id="KW-1185">Reference proteome</keyword>
<keyword id="KW-0862">Zinc</keyword>